<accession>P58982</accession>
<name>MTTC1_METMA</name>
<reference key="1">
    <citation type="journal article" date="2002" name="J. Mol. Microbiol. Biotechnol.">
        <title>The genome of Methanosarcina mazei: evidence for lateral gene transfer between Bacteria and Archaea.</title>
        <authorList>
            <person name="Deppenmeier U."/>
            <person name="Johann A."/>
            <person name="Hartsch T."/>
            <person name="Merkl R."/>
            <person name="Schmitz R.A."/>
            <person name="Martinez-Arias R."/>
            <person name="Henne A."/>
            <person name="Wiezer A."/>
            <person name="Baeumer S."/>
            <person name="Jacobi C."/>
            <person name="Brueggemann H."/>
            <person name="Lienard T."/>
            <person name="Christmann A."/>
            <person name="Boemecke M."/>
            <person name="Steckel S."/>
            <person name="Bhattacharyya A."/>
            <person name="Lykidis A."/>
            <person name="Overbeek R."/>
            <person name="Klenk H.-P."/>
            <person name="Gunsalus R.P."/>
            <person name="Fritz H.-J."/>
            <person name="Gottschalk G."/>
        </authorList>
    </citation>
    <scope>NUCLEOTIDE SEQUENCE [LARGE SCALE GENOMIC DNA]</scope>
    <source>
        <strain>ATCC BAA-159 / DSM 3647 / Goe1 / Go1 / JCM 11833 / OCM 88</strain>
    </source>
</reference>
<gene>
    <name type="primary">mttC1</name>
    <name type="ordered locus">MM_1690</name>
</gene>
<sequence>MANKEEIIAKAKDAITDFDDELAAEVAAEALAAGVDPVELIEKGFTAGMQEVGEQFEQGTLFLPHVLAAAEAMNAGIEVIKPEMEKRKSQTKSLGTIVIGTIEGDIHSIGKDIVASMLNIAGFKVVDLGRDVPIKTFVEKAKEIKPQIIASSALMTTTMVNQIQIEEQLKEAGIRGQVKTMVGGAPVTQDWADKIGADIYGESATDVVSKVKAALL</sequence>
<feature type="initiator methionine" description="Removed" evidence="1">
    <location>
        <position position="1"/>
    </location>
</feature>
<feature type="chain" id="PRO_0000216484" description="Trimethylamine corrinoid protein 1">
    <location>
        <begin position="2"/>
        <end position="216"/>
    </location>
</feature>
<feature type="domain" description="B12-binding N-terminal" evidence="3">
    <location>
        <begin position="1"/>
        <end position="92"/>
    </location>
</feature>
<feature type="domain" description="B12-binding" evidence="2">
    <location>
        <begin position="94"/>
        <end position="216"/>
    </location>
</feature>
<feature type="binding site" description="axial binding residue" evidence="1">
    <location>
        <position position="107"/>
    </location>
    <ligand>
        <name>methylcob(III)alamin</name>
        <dbReference type="ChEBI" id="CHEBI:28115"/>
    </ligand>
    <ligandPart>
        <name>Co</name>
        <dbReference type="ChEBI" id="CHEBI:27638"/>
    </ligandPart>
</feature>
<protein>
    <recommendedName>
        <fullName>Trimethylamine corrinoid protein 1</fullName>
        <shortName>TCP 1</shortName>
    </recommendedName>
</protein>
<comment type="function">
    <text evidence="1">Acts probably as a methyl group carrier between MttB and either MtbA or MtaA.</text>
</comment>
<comment type="pathway">
    <text>One-carbon metabolism; methanogenesis from trimethylamine.</text>
</comment>
<comment type="subunit">
    <text evidence="1">Can form a complex with MttB.</text>
</comment>
<comment type="similarity">
    <text evidence="4">Belongs to the methylamine corrinoid protein family.</text>
</comment>
<keyword id="KW-0170">Cobalt</keyword>
<keyword id="KW-0479">Metal-binding</keyword>
<keyword id="KW-0484">Methanogenesis</keyword>
<keyword id="KW-0677">Repeat</keyword>
<proteinExistence type="inferred from homology"/>
<organism>
    <name type="scientific">Methanosarcina mazei (strain ATCC BAA-159 / DSM 3647 / Goe1 / Go1 / JCM 11833 / OCM 88)</name>
    <name type="common">Methanosarcina frisia</name>
    <dbReference type="NCBI Taxonomy" id="192952"/>
    <lineage>
        <taxon>Archaea</taxon>
        <taxon>Methanobacteriati</taxon>
        <taxon>Methanobacteriota</taxon>
        <taxon>Stenosarchaea group</taxon>
        <taxon>Methanomicrobia</taxon>
        <taxon>Methanosarcinales</taxon>
        <taxon>Methanosarcinaceae</taxon>
        <taxon>Methanosarcina</taxon>
    </lineage>
</organism>
<dbReference type="EMBL" id="AE008384">
    <property type="protein sequence ID" value="AAM31386.1"/>
    <property type="molecule type" value="Genomic_DNA"/>
</dbReference>
<dbReference type="RefSeq" id="WP_011033632.1">
    <property type="nucleotide sequence ID" value="NC_003901.1"/>
</dbReference>
<dbReference type="SMR" id="P58982"/>
<dbReference type="KEGG" id="mma:MM_1690"/>
<dbReference type="PATRIC" id="fig|192952.21.peg.1960"/>
<dbReference type="eggNOG" id="arCOG02028">
    <property type="taxonomic scope" value="Archaea"/>
</dbReference>
<dbReference type="HOGENOM" id="CLU_082102_1_0_2"/>
<dbReference type="UniPathway" id="UPA00645"/>
<dbReference type="Proteomes" id="UP000000595">
    <property type="component" value="Chromosome"/>
</dbReference>
<dbReference type="GO" id="GO:0005829">
    <property type="term" value="C:cytosol"/>
    <property type="evidence" value="ECO:0007669"/>
    <property type="project" value="TreeGrafter"/>
</dbReference>
<dbReference type="GO" id="GO:0031419">
    <property type="term" value="F:cobalamin binding"/>
    <property type="evidence" value="ECO:0007669"/>
    <property type="project" value="InterPro"/>
</dbReference>
<dbReference type="GO" id="GO:0050897">
    <property type="term" value="F:cobalt ion binding"/>
    <property type="evidence" value="ECO:0007669"/>
    <property type="project" value="InterPro"/>
</dbReference>
<dbReference type="GO" id="GO:0008705">
    <property type="term" value="F:methionine synthase activity"/>
    <property type="evidence" value="ECO:0007669"/>
    <property type="project" value="TreeGrafter"/>
</dbReference>
<dbReference type="GO" id="GO:0050667">
    <property type="term" value="P:homocysteine metabolic process"/>
    <property type="evidence" value="ECO:0007669"/>
    <property type="project" value="TreeGrafter"/>
</dbReference>
<dbReference type="GO" id="GO:0015948">
    <property type="term" value="P:methanogenesis"/>
    <property type="evidence" value="ECO:0007669"/>
    <property type="project" value="UniProtKB-KW"/>
</dbReference>
<dbReference type="GO" id="GO:0046653">
    <property type="term" value="P:tetrahydrofolate metabolic process"/>
    <property type="evidence" value="ECO:0007669"/>
    <property type="project" value="TreeGrafter"/>
</dbReference>
<dbReference type="CDD" id="cd02070">
    <property type="entry name" value="corrinoid_protein_B12-BD"/>
    <property type="match status" value="1"/>
</dbReference>
<dbReference type="FunFam" id="3.40.50.280:FF:000003">
    <property type="entry name" value="Dimethylamine methyltransferase corrinoid protein"/>
    <property type="match status" value="1"/>
</dbReference>
<dbReference type="FunFam" id="1.10.1240.10:FF:000004">
    <property type="entry name" value="Monomethylamine methyltransferase corrinoid protein"/>
    <property type="match status" value="1"/>
</dbReference>
<dbReference type="Gene3D" id="3.40.50.280">
    <property type="entry name" value="Cobalamin-binding domain"/>
    <property type="match status" value="1"/>
</dbReference>
<dbReference type="Gene3D" id="1.10.1240.10">
    <property type="entry name" value="Methionine synthase domain"/>
    <property type="match status" value="1"/>
</dbReference>
<dbReference type="InterPro" id="IPR003759">
    <property type="entry name" value="Cbl-bd_cap"/>
</dbReference>
<dbReference type="InterPro" id="IPR006158">
    <property type="entry name" value="Cobalamin-bd"/>
</dbReference>
<dbReference type="InterPro" id="IPR036724">
    <property type="entry name" value="Cobalamin-bd_sf"/>
</dbReference>
<dbReference type="InterPro" id="IPR012741">
    <property type="entry name" value="Corrinoid_p"/>
</dbReference>
<dbReference type="InterPro" id="IPR050554">
    <property type="entry name" value="Met_Synthase/Corrinoid"/>
</dbReference>
<dbReference type="InterPro" id="IPR036594">
    <property type="entry name" value="Meth_synthase_dom"/>
</dbReference>
<dbReference type="NCBIfam" id="TIGR02370">
    <property type="entry name" value="pyl_corrinoid"/>
    <property type="match status" value="1"/>
</dbReference>
<dbReference type="PANTHER" id="PTHR45833">
    <property type="entry name" value="METHIONINE SYNTHASE"/>
    <property type="match status" value="1"/>
</dbReference>
<dbReference type="PANTHER" id="PTHR45833:SF1">
    <property type="entry name" value="METHIONINE SYNTHASE"/>
    <property type="match status" value="1"/>
</dbReference>
<dbReference type="Pfam" id="PF02310">
    <property type="entry name" value="B12-binding"/>
    <property type="match status" value="1"/>
</dbReference>
<dbReference type="Pfam" id="PF02607">
    <property type="entry name" value="B12-binding_2"/>
    <property type="match status" value="1"/>
</dbReference>
<dbReference type="SMART" id="SM01018">
    <property type="entry name" value="B12-binding_2"/>
    <property type="match status" value="1"/>
</dbReference>
<dbReference type="SUPFAM" id="SSF52242">
    <property type="entry name" value="Cobalamin (vitamin B12)-binding domain"/>
    <property type="match status" value="1"/>
</dbReference>
<dbReference type="SUPFAM" id="SSF47644">
    <property type="entry name" value="Methionine synthase domain"/>
    <property type="match status" value="1"/>
</dbReference>
<dbReference type="PROSITE" id="PS51332">
    <property type="entry name" value="B12_BINDING"/>
    <property type="match status" value="1"/>
</dbReference>
<dbReference type="PROSITE" id="PS51337">
    <property type="entry name" value="B12_BINDING_NTER"/>
    <property type="match status" value="1"/>
</dbReference>
<evidence type="ECO:0000250" key="1"/>
<evidence type="ECO:0000255" key="2">
    <source>
        <dbReference type="PROSITE-ProRule" id="PRU00666"/>
    </source>
</evidence>
<evidence type="ECO:0000255" key="3">
    <source>
        <dbReference type="PROSITE-ProRule" id="PRU00667"/>
    </source>
</evidence>
<evidence type="ECO:0000305" key="4"/>